<reference key="1">
    <citation type="journal article" date="2004" name="Nat. Biotechnol.">
        <title>Complete sequence and comparative genome analysis of the dairy bacterium Streptococcus thermophilus.</title>
        <authorList>
            <person name="Bolotin A."/>
            <person name="Quinquis B."/>
            <person name="Renault P."/>
            <person name="Sorokin A."/>
            <person name="Ehrlich S.D."/>
            <person name="Kulakauskas S."/>
            <person name="Lapidus A."/>
            <person name="Goltsman E."/>
            <person name="Mazur M."/>
            <person name="Pusch G.D."/>
            <person name="Fonstein M."/>
            <person name="Overbeek R."/>
            <person name="Kyprides N."/>
            <person name="Purnelle B."/>
            <person name="Prozzi D."/>
            <person name="Ngui K."/>
            <person name="Masuy D."/>
            <person name="Hancy F."/>
            <person name="Burteau S."/>
            <person name="Boutry M."/>
            <person name="Delcour J."/>
            <person name="Goffeau A."/>
            <person name="Hols P."/>
        </authorList>
    </citation>
    <scope>NUCLEOTIDE SEQUENCE [LARGE SCALE GENOMIC DNA]</scope>
    <source>
        <strain>ATCC BAA-250 / LMG 18311</strain>
    </source>
</reference>
<dbReference type="EC" id="2.3.1.89" evidence="1"/>
<dbReference type="EMBL" id="CP000023">
    <property type="protein sequence ID" value="AAV61438.1"/>
    <property type="molecule type" value="Genomic_DNA"/>
</dbReference>
<dbReference type="SMR" id="Q5M2I4"/>
<dbReference type="STRING" id="264199.stu1839"/>
<dbReference type="KEGG" id="stl:stu1839"/>
<dbReference type="eggNOG" id="COG2171">
    <property type="taxonomic scope" value="Bacteria"/>
</dbReference>
<dbReference type="HOGENOM" id="CLU_103751_0_0_9"/>
<dbReference type="UniPathway" id="UPA00034">
    <property type="reaction ID" value="UER00022"/>
</dbReference>
<dbReference type="Proteomes" id="UP000001170">
    <property type="component" value="Chromosome"/>
</dbReference>
<dbReference type="GO" id="GO:0047200">
    <property type="term" value="F:tetrahydrodipicolinate N-acetyltransferase activity"/>
    <property type="evidence" value="ECO:0007669"/>
    <property type="project" value="UniProtKB-EC"/>
</dbReference>
<dbReference type="GO" id="GO:0019877">
    <property type="term" value="P:diaminopimelate biosynthetic process"/>
    <property type="evidence" value="ECO:0007669"/>
    <property type="project" value="UniProtKB-UniRule"/>
</dbReference>
<dbReference type="GO" id="GO:0009089">
    <property type="term" value="P:lysine biosynthetic process via diaminopimelate"/>
    <property type="evidence" value="ECO:0007669"/>
    <property type="project" value="UniProtKB-UniRule"/>
</dbReference>
<dbReference type="Gene3D" id="2.160.10.10">
    <property type="entry name" value="Hexapeptide repeat proteins"/>
    <property type="match status" value="1"/>
</dbReference>
<dbReference type="Gene3D" id="3.30.70.250">
    <property type="entry name" value="Malonyl-CoA ACP transacylase, ACP-binding"/>
    <property type="match status" value="1"/>
</dbReference>
<dbReference type="HAMAP" id="MF_01691">
    <property type="entry name" value="DapH"/>
    <property type="match status" value="1"/>
</dbReference>
<dbReference type="InterPro" id="IPR019873">
    <property type="entry name" value="DapH"/>
</dbReference>
<dbReference type="InterPro" id="IPR013710">
    <property type="entry name" value="DapH_N"/>
</dbReference>
<dbReference type="InterPro" id="IPR001451">
    <property type="entry name" value="Hexapep"/>
</dbReference>
<dbReference type="InterPro" id="IPR018357">
    <property type="entry name" value="Hexapep_transf_CS"/>
</dbReference>
<dbReference type="InterPro" id="IPR050179">
    <property type="entry name" value="Trans_hexapeptide_repeat"/>
</dbReference>
<dbReference type="InterPro" id="IPR011004">
    <property type="entry name" value="Trimer_LpxA-like_sf"/>
</dbReference>
<dbReference type="NCBIfam" id="TIGR03532">
    <property type="entry name" value="DapD_Ac"/>
    <property type="match status" value="1"/>
</dbReference>
<dbReference type="PANTHER" id="PTHR43300:SF10">
    <property type="entry name" value="2,3,4,5-TETRAHYDROPYRIDINE-2,6-DICARBOXYLATE N-ACETYLTRANSFERASE"/>
    <property type="match status" value="1"/>
</dbReference>
<dbReference type="PANTHER" id="PTHR43300">
    <property type="entry name" value="ACETYLTRANSFERASE"/>
    <property type="match status" value="1"/>
</dbReference>
<dbReference type="Pfam" id="PF08503">
    <property type="entry name" value="DapH_N"/>
    <property type="match status" value="1"/>
</dbReference>
<dbReference type="Pfam" id="PF00132">
    <property type="entry name" value="Hexapep"/>
    <property type="match status" value="1"/>
</dbReference>
<dbReference type="Pfam" id="PF14602">
    <property type="entry name" value="Hexapep_2"/>
    <property type="match status" value="1"/>
</dbReference>
<dbReference type="SUPFAM" id="SSF51161">
    <property type="entry name" value="Trimeric LpxA-like enzymes"/>
    <property type="match status" value="1"/>
</dbReference>
<dbReference type="PROSITE" id="PS00101">
    <property type="entry name" value="HEXAPEP_TRANSFERASES"/>
    <property type="match status" value="2"/>
</dbReference>
<organism>
    <name type="scientific">Streptococcus thermophilus (strain ATCC BAA-250 / LMG 18311)</name>
    <dbReference type="NCBI Taxonomy" id="264199"/>
    <lineage>
        <taxon>Bacteria</taxon>
        <taxon>Bacillati</taxon>
        <taxon>Bacillota</taxon>
        <taxon>Bacilli</taxon>
        <taxon>Lactobacillales</taxon>
        <taxon>Streptococcaceae</taxon>
        <taxon>Streptococcus</taxon>
    </lineage>
</organism>
<sequence length="232" mass="24120">MTAQKMSAQEIIAFIGNAEKKTNVKVTFEGELATAVPSSVTKLGNVLFGDWKDIEPLLANLTENKDYVVEQDGRNSAVPLLDKRHLNARIEPGAIIRDQVTIEDNAVVMMGAVINIGAEIGAGTMIDMGAILGGRATVGKNSHIGAGAVLAGVIEPASAEPVRIGDNVLVGANAVVIEGVQVGNGSVVAAGAIVTQDVPENVVVAGVPARIIKEIDEKTQQKTALEDALRNL</sequence>
<proteinExistence type="inferred from homology"/>
<name>DAPH_STRT2</name>
<gene>
    <name evidence="1" type="primary">dapH</name>
    <name type="ordered locus">stu1839</name>
</gene>
<evidence type="ECO:0000255" key="1">
    <source>
        <dbReference type="HAMAP-Rule" id="MF_01691"/>
    </source>
</evidence>
<protein>
    <recommendedName>
        <fullName evidence="1">2,3,4,5-tetrahydropyridine-2,6-dicarboxylate N-acetyltransferase</fullName>
        <ecNumber evidence="1">2.3.1.89</ecNumber>
    </recommendedName>
    <alternativeName>
        <fullName evidence="1">Tetrahydrodipicolinate N-acetyltransferase</fullName>
        <shortName evidence="1">THP acetyltransferase</shortName>
        <shortName evidence="1">Tetrahydropicolinate acetylase</shortName>
    </alternativeName>
</protein>
<comment type="function">
    <text evidence="1">Catalyzes the transfer of an acetyl group from acetyl-CoA to tetrahydrodipicolinate.</text>
</comment>
<comment type="catalytic activity">
    <reaction evidence="1">
        <text>(S)-2,3,4,5-tetrahydrodipicolinate + acetyl-CoA + H2O = L-2-acetamido-6-oxoheptanedioate + CoA</text>
        <dbReference type="Rhea" id="RHEA:13085"/>
        <dbReference type="ChEBI" id="CHEBI:15377"/>
        <dbReference type="ChEBI" id="CHEBI:16845"/>
        <dbReference type="ChEBI" id="CHEBI:57287"/>
        <dbReference type="ChEBI" id="CHEBI:57288"/>
        <dbReference type="ChEBI" id="CHEBI:58117"/>
        <dbReference type="EC" id="2.3.1.89"/>
    </reaction>
</comment>
<comment type="pathway">
    <text evidence="1">Amino-acid biosynthesis; L-lysine biosynthesis via DAP pathway; LL-2,6-diaminopimelate from (S)-tetrahydrodipicolinate (acetylase route): step 1/3.</text>
</comment>
<comment type="similarity">
    <text evidence="1">Belongs to the transferase hexapeptide repeat family. DapH subfamily.</text>
</comment>
<feature type="chain" id="PRO_0000376719" description="2,3,4,5-tetrahydropyridine-2,6-dicarboxylate N-acetyltransferase">
    <location>
        <begin position="1"/>
        <end position="232"/>
    </location>
</feature>
<accession>Q5M2I4</accession>
<keyword id="KW-0012">Acyltransferase</keyword>
<keyword id="KW-0028">Amino-acid biosynthesis</keyword>
<keyword id="KW-0220">Diaminopimelate biosynthesis</keyword>
<keyword id="KW-0457">Lysine biosynthesis</keyword>
<keyword id="KW-1185">Reference proteome</keyword>
<keyword id="KW-0677">Repeat</keyword>
<keyword id="KW-0808">Transferase</keyword>